<organism>
    <name type="scientific">Staphylococcus aureus (strain MRSA252)</name>
    <dbReference type="NCBI Taxonomy" id="282458"/>
    <lineage>
        <taxon>Bacteria</taxon>
        <taxon>Bacillati</taxon>
        <taxon>Bacillota</taxon>
        <taxon>Bacilli</taxon>
        <taxon>Bacillales</taxon>
        <taxon>Staphylococcaceae</taxon>
        <taxon>Staphylococcus</taxon>
    </lineage>
</organism>
<comment type="function">
    <text evidence="1">Catalyzes the attachment of tryptophan to tRNA(Trp).</text>
</comment>
<comment type="catalytic activity">
    <reaction evidence="1">
        <text>tRNA(Trp) + L-tryptophan + ATP = L-tryptophyl-tRNA(Trp) + AMP + diphosphate + H(+)</text>
        <dbReference type="Rhea" id="RHEA:24080"/>
        <dbReference type="Rhea" id="RHEA-COMP:9671"/>
        <dbReference type="Rhea" id="RHEA-COMP:9705"/>
        <dbReference type="ChEBI" id="CHEBI:15378"/>
        <dbReference type="ChEBI" id="CHEBI:30616"/>
        <dbReference type="ChEBI" id="CHEBI:33019"/>
        <dbReference type="ChEBI" id="CHEBI:57912"/>
        <dbReference type="ChEBI" id="CHEBI:78442"/>
        <dbReference type="ChEBI" id="CHEBI:78535"/>
        <dbReference type="ChEBI" id="CHEBI:456215"/>
        <dbReference type="EC" id="6.1.1.2"/>
    </reaction>
</comment>
<comment type="subunit">
    <text evidence="1">Homodimer.</text>
</comment>
<comment type="subcellular location">
    <subcellularLocation>
        <location evidence="1">Cytoplasm</location>
    </subcellularLocation>
</comment>
<comment type="similarity">
    <text evidence="1">Belongs to the class-I aminoacyl-tRNA synthetase family.</text>
</comment>
<dbReference type="EC" id="6.1.1.2" evidence="1"/>
<dbReference type="EMBL" id="BX571856">
    <property type="protein sequence ID" value="CAG39969.1"/>
    <property type="molecule type" value="Genomic_DNA"/>
</dbReference>
<dbReference type="RefSeq" id="WP_000448933.1">
    <property type="nucleotide sequence ID" value="NC_002952.2"/>
</dbReference>
<dbReference type="SMR" id="Q6GI89"/>
<dbReference type="KEGG" id="sar:SAR0964"/>
<dbReference type="HOGENOM" id="CLU_029244_1_1_9"/>
<dbReference type="Proteomes" id="UP000000596">
    <property type="component" value="Chromosome"/>
</dbReference>
<dbReference type="GO" id="GO:0005829">
    <property type="term" value="C:cytosol"/>
    <property type="evidence" value="ECO:0007669"/>
    <property type="project" value="TreeGrafter"/>
</dbReference>
<dbReference type="GO" id="GO:0005524">
    <property type="term" value="F:ATP binding"/>
    <property type="evidence" value="ECO:0007669"/>
    <property type="project" value="UniProtKB-UniRule"/>
</dbReference>
<dbReference type="GO" id="GO:0004830">
    <property type="term" value="F:tryptophan-tRNA ligase activity"/>
    <property type="evidence" value="ECO:0007669"/>
    <property type="project" value="UniProtKB-UniRule"/>
</dbReference>
<dbReference type="GO" id="GO:0006436">
    <property type="term" value="P:tryptophanyl-tRNA aminoacylation"/>
    <property type="evidence" value="ECO:0007669"/>
    <property type="project" value="UniProtKB-UniRule"/>
</dbReference>
<dbReference type="CDD" id="cd00806">
    <property type="entry name" value="TrpRS_core"/>
    <property type="match status" value="1"/>
</dbReference>
<dbReference type="FunFam" id="1.10.240.10:FF:000002">
    <property type="entry name" value="Tryptophan--tRNA ligase"/>
    <property type="match status" value="1"/>
</dbReference>
<dbReference type="Gene3D" id="3.40.50.620">
    <property type="entry name" value="HUPs"/>
    <property type="match status" value="1"/>
</dbReference>
<dbReference type="Gene3D" id="1.10.240.10">
    <property type="entry name" value="Tyrosyl-Transfer RNA Synthetase"/>
    <property type="match status" value="1"/>
</dbReference>
<dbReference type="HAMAP" id="MF_00140_B">
    <property type="entry name" value="Trp_tRNA_synth_B"/>
    <property type="match status" value="1"/>
</dbReference>
<dbReference type="InterPro" id="IPR001412">
    <property type="entry name" value="aa-tRNA-synth_I_CS"/>
</dbReference>
<dbReference type="InterPro" id="IPR002305">
    <property type="entry name" value="aa-tRNA-synth_Ic"/>
</dbReference>
<dbReference type="InterPro" id="IPR014729">
    <property type="entry name" value="Rossmann-like_a/b/a_fold"/>
</dbReference>
<dbReference type="InterPro" id="IPR002306">
    <property type="entry name" value="Trp-tRNA-ligase"/>
</dbReference>
<dbReference type="InterPro" id="IPR024109">
    <property type="entry name" value="Trp-tRNA-ligase_bac-type"/>
</dbReference>
<dbReference type="InterPro" id="IPR050203">
    <property type="entry name" value="Trp-tRNA_synthetase"/>
</dbReference>
<dbReference type="NCBIfam" id="TIGR00233">
    <property type="entry name" value="trpS"/>
    <property type="match status" value="1"/>
</dbReference>
<dbReference type="PANTHER" id="PTHR43766">
    <property type="entry name" value="TRYPTOPHAN--TRNA LIGASE, MITOCHONDRIAL"/>
    <property type="match status" value="1"/>
</dbReference>
<dbReference type="PANTHER" id="PTHR43766:SF1">
    <property type="entry name" value="TRYPTOPHAN--TRNA LIGASE, MITOCHONDRIAL"/>
    <property type="match status" value="1"/>
</dbReference>
<dbReference type="Pfam" id="PF00579">
    <property type="entry name" value="tRNA-synt_1b"/>
    <property type="match status" value="1"/>
</dbReference>
<dbReference type="PRINTS" id="PR01039">
    <property type="entry name" value="TRNASYNTHTRP"/>
</dbReference>
<dbReference type="SUPFAM" id="SSF52374">
    <property type="entry name" value="Nucleotidylyl transferase"/>
    <property type="match status" value="1"/>
</dbReference>
<dbReference type="PROSITE" id="PS00178">
    <property type="entry name" value="AA_TRNA_LIGASE_I"/>
    <property type="match status" value="1"/>
</dbReference>
<protein>
    <recommendedName>
        <fullName evidence="1">Tryptophan--tRNA ligase</fullName>
        <ecNumber evidence="1">6.1.1.2</ecNumber>
    </recommendedName>
    <alternativeName>
        <fullName evidence="1">Tryptophanyl-tRNA synthetase</fullName>
        <shortName evidence="1">TrpRS</shortName>
    </alternativeName>
</protein>
<name>SYW_STAAR</name>
<keyword id="KW-0030">Aminoacyl-tRNA synthetase</keyword>
<keyword id="KW-0067">ATP-binding</keyword>
<keyword id="KW-0963">Cytoplasm</keyword>
<keyword id="KW-0436">Ligase</keyword>
<keyword id="KW-0547">Nucleotide-binding</keyword>
<keyword id="KW-0648">Protein biosynthesis</keyword>
<accession>Q6GI89</accession>
<evidence type="ECO:0000255" key="1">
    <source>
        <dbReference type="HAMAP-Rule" id="MF_00140"/>
    </source>
</evidence>
<reference key="1">
    <citation type="journal article" date="2004" name="Proc. Natl. Acad. Sci. U.S.A.">
        <title>Complete genomes of two clinical Staphylococcus aureus strains: evidence for the rapid evolution of virulence and drug resistance.</title>
        <authorList>
            <person name="Holden M.T.G."/>
            <person name="Feil E.J."/>
            <person name="Lindsay J.A."/>
            <person name="Peacock S.J."/>
            <person name="Day N.P.J."/>
            <person name="Enright M.C."/>
            <person name="Foster T.J."/>
            <person name="Moore C.E."/>
            <person name="Hurst L."/>
            <person name="Atkin R."/>
            <person name="Barron A."/>
            <person name="Bason N."/>
            <person name="Bentley S.D."/>
            <person name="Chillingworth C."/>
            <person name="Chillingworth T."/>
            <person name="Churcher C."/>
            <person name="Clark L."/>
            <person name="Corton C."/>
            <person name="Cronin A."/>
            <person name="Doggett J."/>
            <person name="Dowd L."/>
            <person name="Feltwell T."/>
            <person name="Hance Z."/>
            <person name="Harris B."/>
            <person name="Hauser H."/>
            <person name="Holroyd S."/>
            <person name="Jagels K."/>
            <person name="James K.D."/>
            <person name="Lennard N."/>
            <person name="Line A."/>
            <person name="Mayes R."/>
            <person name="Moule S."/>
            <person name="Mungall K."/>
            <person name="Ormond D."/>
            <person name="Quail M.A."/>
            <person name="Rabbinowitsch E."/>
            <person name="Rutherford K.M."/>
            <person name="Sanders M."/>
            <person name="Sharp S."/>
            <person name="Simmonds M."/>
            <person name="Stevens K."/>
            <person name="Whitehead S."/>
            <person name="Barrell B.G."/>
            <person name="Spratt B.G."/>
            <person name="Parkhill J."/>
        </authorList>
    </citation>
    <scope>NUCLEOTIDE SEQUENCE [LARGE SCALE GENOMIC DNA]</scope>
    <source>
        <strain>MRSA252</strain>
    </source>
</reference>
<gene>
    <name evidence="1" type="primary">trpS</name>
    <name type="ordered locus">SAR0964</name>
</gene>
<feature type="chain" id="PRO_0000136678" description="Tryptophan--tRNA ligase">
    <location>
        <begin position="1"/>
        <end position="329"/>
    </location>
</feature>
<feature type="short sequence motif" description="'HIGH' region" evidence="1">
    <location>
        <begin position="10"/>
        <end position="18"/>
    </location>
</feature>
<feature type="short sequence motif" description="'KMSKS' region" evidence="1">
    <location>
        <begin position="193"/>
        <end position="197"/>
    </location>
</feature>
<feature type="binding site" evidence="1">
    <location>
        <begin position="9"/>
        <end position="11"/>
    </location>
    <ligand>
        <name>ATP</name>
        <dbReference type="ChEBI" id="CHEBI:30616"/>
    </ligand>
</feature>
<feature type="binding site" evidence="1">
    <location>
        <begin position="17"/>
        <end position="18"/>
    </location>
    <ligand>
        <name>ATP</name>
        <dbReference type="ChEBI" id="CHEBI:30616"/>
    </ligand>
</feature>
<feature type="binding site" evidence="1">
    <location>
        <position position="133"/>
    </location>
    <ligand>
        <name>L-tryptophan</name>
        <dbReference type="ChEBI" id="CHEBI:57912"/>
    </ligand>
</feature>
<feature type="binding site" evidence="1">
    <location>
        <begin position="145"/>
        <end position="147"/>
    </location>
    <ligand>
        <name>ATP</name>
        <dbReference type="ChEBI" id="CHEBI:30616"/>
    </ligand>
</feature>
<feature type="binding site" evidence="1">
    <location>
        <position position="184"/>
    </location>
    <ligand>
        <name>ATP</name>
        <dbReference type="ChEBI" id="CHEBI:30616"/>
    </ligand>
</feature>
<feature type="binding site" evidence="1">
    <location>
        <begin position="193"/>
        <end position="197"/>
    </location>
    <ligand>
        <name>ATP</name>
        <dbReference type="ChEBI" id="CHEBI:30616"/>
    </ligand>
</feature>
<sequence>METLFSGIQPSGIPTIGNYIGALKQFVDVQNDYDCYFCIVDQHAITMPQDRLKLRKQTRQLAAIYLASGIDPDKATLFIQSEVPAHVQAGWMLTTIASVGELERMTQYKDKAQKAVEGIPAGLLTYPPLMAADIVLYNTNIVPVGDDQKQHIELTRNLVDRFNSRYNDVLVKPEIRMPKVGGRVMSLQDPTRKMSKSDDNAKNFISLLDEPNVAAKKIKSAVTDSDGIIKFDRDNKPGITNLISIYAGLTDMPIKDIEAKYEGEGYGKFKGDLAEIVKAFLVEFQEKYESFYNSDKLDDILDQGRDKAHKASFKTVKKMEKAMGLGRKR</sequence>
<proteinExistence type="inferred from homology"/>